<organism>
    <name type="scientific">Drosophila melanogaster</name>
    <name type="common">Fruit fly</name>
    <dbReference type="NCBI Taxonomy" id="7227"/>
    <lineage>
        <taxon>Eukaryota</taxon>
        <taxon>Metazoa</taxon>
        <taxon>Ecdysozoa</taxon>
        <taxon>Arthropoda</taxon>
        <taxon>Hexapoda</taxon>
        <taxon>Insecta</taxon>
        <taxon>Pterygota</taxon>
        <taxon>Neoptera</taxon>
        <taxon>Endopterygota</taxon>
        <taxon>Diptera</taxon>
        <taxon>Brachycera</taxon>
        <taxon>Muscomorpha</taxon>
        <taxon>Ephydroidea</taxon>
        <taxon>Drosophilidae</taxon>
        <taxon>Drosophila</taxon>
        <taxon>Sophophora</taxon>
    </lineage>
</organism>
<accession>P04282</accession>
<evidence type="ECO:0000256" key="1">
    <source>
        <dbReference type="SAM" id="MobiDB-lite"/>
    </source>
</evidence>
<evidence type="ECO:0000305" key="2"/>
<gene>
    <name type="primary">gag</name>
</gene>
<feature type="chain" id="PRO_0000087419" description="Retrovirus-related Gag polyprotein from copia-like transposable element 17.6">
    <location>
        <begin position="1"/>
        <end position="439"/>
    </location>
</feature>
<feature type="region of interest" description="Disordered" evidence="1">
    <location>
        <begin position="203"/>
        <end position="224"/>
    </location>
</feature>
<feature type="region of interest" description="Disordered" evidence="1">
    <location>
        <begin position="243"/>
        <end position="353"/>
    </location>
</feature>
<feature type="region of interest" description="Disordered" evidence="1">
    <location>
        <begin position="412"/>
        <end position="439"/>
    </location>
</feature>
<feature type="compositionally biased region" description="Polar residues" evidence="1">
    <location>
        <begin position="245"/>
        <end position="255"/>
    </location>
</feature>
<feature type="compositionally biased region" description="Polar residues" evidence="1">
    <location>
        <begin position="266"/>
        <end position="312"/>
    </location>
</feature>
<feature type="compositionally biased region" description="Low complexity" evidence="1">
    <location>
        <begin position="313"/>
        <end position="333"/>
    </location>
</feature>
<protein>
    <recommendedName>
        <fullName>Retrovirus-related Gag polyprotein from copia-like transposable element 17.6</fullName>
    </recommendedName>
</protein>
<comment type="subcellular location">
    <subcellularLocation>
        <location evidence="2">Virion</location>
    </subcellularLocation>
</comment>
<keyword id="KW-0814">Transposable element</keyword>
<keyword id="KW-0946">Virion</keyword>
<reference key="1">
    <citation type="journal article" date="1984" name="Nature">
        <title>Identification of the coding sequence for a reverse transcriptase-like enzyme in a transposable genetic element in Drosophila melanogaster.</title>
        <authorList>
            <person name="Saigo K."/>
            <person name="Kugimiya W."/>
            <person name="Matsuo Y."/>
            <person name="Inouye S."/>
            <person name="Yoshioka K."/>
            <person name="Yuki S."/>
        </authorList>
    </citation>
    <scope>NUCLEOTIDE SEQUENCE [GENOMIC DNA]</scope>
</reference>
<name>GAG17_DROME</name>
<proteinExistence type="predicted"/>
<sequence>MAQEPAIVPPLSDSNMTQVAYQIGNVEKFNGDPGSLYTFVSRIDYILALYATGDERQQQIIFGHIERSISGEVMRCIGAYDMYTWQQLRRQLVLNYKPQTPNHVLLEEFRKTPFRGNVRAFLEEAESRRQTLTSKLELEQDLEEKTFYLKLIKSSIESLIEKLPTHIYLRINNHNIPDLRSLINLLQEKGMYEQINHTSTHVQKQNFSDKPQKSFNQNTNQSNNIRKYPTPFLHYNSPIPYQAPQIYQTPPTNNPLYRHPIPYHPNPNNVFQPSQQNNVFQPSQQNNAFQPNQRTNFTSRPIFNTNRNNAFDQNRFGQQPQYQNQQSTQNSSSYVPNRPIKRLRPANSGQTGMSVDETLYQEDAFYQQCVPYDYFYYPTYDHSDYYPENQYQIDENNQNLQRTQQLQQINTDETNNDNQEPNVEQAENFQPQALENPNI</sequence>
<dbReference type="EMBL" id="X01472">
    <property type="protein sequence ID" value="CAA25701.1"/>
    <property type="molecule type" value="Genomic_DNA"/>
</dbReference>
<dbReference type="PIR" id="A03325">
    <property type="entry name" value="QXFF71"/>
</dbReference>
<dbReference type="FlyBase" id="FBgn0044339">
    <property type="gene designation" value="17.6\gag"/>
</dbReference>
<dbReference type="PRO" id="PR:P04282"/>